<comment type="function">
    <text evidence="3">Functions as a receptor for membrane-bound ligands Jagged-1 (JAG1), Jagged-2 (JAG2) and Delta-1 (DLL1) to regulate cell-fate determination. Upon ligand activation through the released notch intracellular domain (NICD) it forms a transcriptional activator complex with RBPJ/RBPSUH and activates genes of the enhancer of split locus. Affects the implementation of differentiation, proliferation and apoptotic programs. Involved in angiogenesis; negatively regulates endothelial cell proliferation and migration and angiogenic sprouting. Involved in the maturation of both CD4(+) and CD8(+) cells in the thymus. Important for follicular differentiation and possibly cell fate selection within the follicle. During cerebellar development, functions as a receptor for neuronal DNER and is involved in the differentiation of Bergmann glia. Represses neuronal and myogenic differentiation. May play an essential role in postimplantation development, probably in some aspect of cell specification and/or differentiation. May be involved in mesoderm development, somite formation and neurogenesis. May enhance HIF1A function by sequestering HIF1AN away from HIF1A (By similarity). Required for the THBS4 function in regulating protective astrogenesis from the subventricular zone (SVZ) niche after injury. Involved in determination of left/right symmetry by modulating the balance between motile and immotile (sensory) cilia at the left-right organiser (LRO) (By similarity).</text>
</comment>
<comment type="subunit">
    <text evidence="2 3 4">Heterodimer of a C-terminal fragment N(TM) and an N-terminal fragment N(EC) which are probably linked by disulfide bonds. Interacts with DNER, DTX1, DTX2 and RBPJ/RBPSUH. Also interacts with MAML1, MAML2 and MAML3 which act as transcriptional coactivators for NOTCH1. Notch 1 intracellular domain interacts with SNW1; the interaction involves multimerized NOTCH1 NICD and is implicated in a formation of an intermediate preactivation complex which associates with DNA-bound CBF-1/RBPJ. The activated membrane-bound form interacts with AAK1 which promotes NOTCH1 stabilization. Forms a trimeric complex with FBXW7 and SGK1. Interacts with HIF1AN. HIF1AN negatively regulates the function of notch intracellular domain (NICD), accelerating myogenic differentiation. Interacts (via NICD) with SNAI1 (via zinc fingers); the interaction induces SNAI1 degradation via MDM2-mediated ubiquitination and inhibits SNAI1-induced cell invasion. Interacts (via NICD) with MDM2A. Interacts (via NICD) with BCL6; the interaction decreases MAML1 recruitment by NOTCH1 NICD on target genes DNA and inhibits NOTCH1 transactivation activity (By similarity). Interacts with THBS4 (By similarity). Interacts (via the EGF-like repeat region) with CCN3 (via CTCK domain). Interacts (via EGF-like domains) with DLL4 (via N-terminal DSL and MNNL domains). Interacts with ZMIZ1. Interacts (via NICD domain) with MEGF10 (via the cytoplasmic domain). Interacts with DLL1 and JAG1 (By similarity). Interacts (via NICD domain) with PRAG1 (By similarity). Forms a complex with PRAG1, N1ICD and MAML1, in a MAML1-dependent manner (By similarity). Interacts (via transmembrane region) with PSEN1; the interaction is direct (By similarity). Interacts with ZFP64 (By similarity).</text>
</comment>
<comment type="subcellular location">
    <subcellularLocation>
        <location evidence="3">Cell membrane</location>
        <topology evidence="3">Single-pass type I membrane protein</topology>
    </subcellularLocation>
    <subcellularLocation>
        <location evidence="3">Late endosome membrane</location>
        <topology evidence="3">Single-pass type I membrane protein</topology>
    </subcellularLocation>
    <text evidence="3">Non-activated receptor is targeted for lysosomal degradation via the endosomal pathway; transport from late endosomes to lysosomes requires deuibiquitination by USP12.</text>
</comment>
<comment type="subcellular location">
    <molecule>Notch 1 intracellular domain</molecule>
    <subcellularLocation>
        <location evidence="3">Nucleus</location>
    </subcellularLocation>
    <text evidence="3">Following proteolytical processing NICD is translocated to the nucleus. Nuclear location may require MEGF10.</text>
</comment>
<comment type="domain">
    <text evidence="2">Interaction with PSEN1 causes partial unwinding of the transmembrane helix, facilitating access to the scissile peptide bond.</text>
</comment>
<comment type="PTM">
    <text evidence="3">Synthesized in the endoplasmic reticulum as an inactive form which is proteolytically cleaved by a furin-like convertase in the trans-Golgi network before it reaches the plasma membrane to yield an active, ligand-accessible form. Cleavage results in a C-terminal fragment N(TM) and a N-terminal fragment N(EC). Following ligand binding, it is cleaved by ADAM17 to yield a membrane-associated intermediate fragment called notch extracellular truncation (NEXT). Following endocytosis, this fragment is then cleaved by one of the catalytic subunits of gamma-secretase (PSEN1 or PSEN2) to release a Notch-derived peptide containing the intracellular domain (NICD) from the membrane.</text>
</comment>
<comment type="PTM">
    <text evidence="1">Phosphorylated.</text>
</comment>
<comment type="PTM">
    <text evidence="2 3 4 9">O-linked glycosylation by GALNT11 is involved in determination of left/right symmetry: glycosylation promotes activation of NOTCH1, possibly by promoting cleavage by ADAM17, modulating the balance between motile and immotile (sensory) cilia at the left-right organiser (LRO) (By similarity). O-glycosylated on the EGF-like domains (PubMed:10734111). O-glucosylated at Ser-451 by KDELC1 and KDELC2 (By similarity). Contains both O-linked fucose and O-linked glucose in the EGF-like domains 11, 12 and 13, which are interacting with the residues on DLL4. MFNG-, RFNG- and LFNG-mediated modification of O-fucose residues at specific EGF-like domains results in inhibition of its activation by JAG1 and enhancement of its activation by DLL1 via an increased binding to DLL1 (By similarity).</text>
</comment>
<comment type="PTM">
    <text evidence="3">Ubiquitinated. Undergoes 'Lys-29'-linked polyubiquitination by ITCH; promotes the lysosomal degradation of non-activated internalized NOTCH1 (By similarity). Deubiquitination by USP12 is required for transport of internalized non-activated receptor from late endosomes to lysosomes for degradation (By similarity). Monoubiquitination at Lys-1765 is required for activation by gamma-secretase cleavage, it promotes interaction with AAK1, which stabilizes it. Deubiquitination by EIF3F is necessary for nuclear import of activated Notch (By similarity).</text>
</comment>
<comment type="PTM">
    <text evidence="1">Hydroxylated at Asn-1961 by HIF1AN. Hydroxylated at Asn-2028 by HIF1AN (By similarity). Hydroxylation reduces affinity for HI1AN and may thus indirectly modulate negative regulation of NICD (By similarity).</text>
</comment>
<comment type="similarity">
    <text evidence="10">Belongs to the NOTCH family.</text>
</comment>
<gene>
    <name type="primary">NOTCH1</name>
</gene>
<sequence>MGRSDSRAGALLEGGCEQNIDPRRAAHCHHPRLATSSLRCSQPSGTCLNGGRCEVANGTEACVCSGPFVGQRCQDPNPCLSTPCKNAGTCHVVEHGGTVNYACSCPLGFSGPLCLTPLDNACLANPCRNGGTCDLLTLTEYKCRCPPGWSGKSCQQADPCASNPCANGGQCLPFESSYICGCPPGFHGPTCRQDVNECSQNPGLCRHGGTCHNEIGSYRCVCRATHTGPHCELPYVPCSPSPCQNGGTCRPTGDTTHECACLPGFAGQNCEENVDDCPGNNCKNGGACVDGVNTYNCRCPPEWTGQYCTEDVDECQLMPNACQNGGTCHNTHGGYNCVCVNGWTGEDCSENIDDCASAACFQGATCHDRVASFYCECPHGRTGLLCHLNDACISNPCNEGSNCDTNPVNGKAICTCPSGYTGPACSQDVDECALGANPCEHAGKCLNTLGSFECQCLQGYTGPRCEIDVNECISNPCQNDATCLDQIGEFQCICMPGYEGVYCEINTDECASSPCLHNGHCMDKINEFLCQCPKGFSGHLCQYDVDECASTPCKNGAKCLDGPNTYTCVCTEGYTGTHCEVDIDECDPDPCHYGFCKDGVATFTCLCQPGYTGHHCETNINECHSQPCRHGGTCQDRDNSYLCLCLKGTTGPNCEINLDDCASNPCDSGTCLDKIDGYECACEPGYTGSMCNVNIDECAGSPCHNGGTCEDGIAGFTCRCPEGYHDPTCLSEVNECNSNPCIHGACRDGLNGYKCDCAPGWSGTNCDINNNECESNPCVNGGTCKDMTSGYVCTCREGFSGPNCQTNINECASNPCLNQGTCIDDVAGYKCNCPLPYTGATCEVVLAPCATSPCKNSGVCKESEDYESFSCVCPTGWQGQTCEIDINECVKSPCRHGASCQNTNGSYRCLCQAGYTGRNCESDIDDCRPNPCHNGGSCTDGINMAFCDCLPGFQGAFCEEDINECASNPCRNGANCTDCVDSYTCTCPAGFNGIHCENNTPDCTESSCFNGGTCVDGINSFTCLCPPGFTGSYCQYDVNECDSRPCLHGGTCQDSYGTYKCTCPQGYTGLNCQNLVHWCDSAPCKNGGKCWQTNTQYHCECRSGWTGFNCDVLSVSCEVAAQKRGIDVTLLCQHGGLCVDEEDKHYCHCQAGYTGSYCEDEVDECSPNPCQNGATCTDYLGGFSCKCVAGYHGSNCSEEINECLSQPCQNGGTCIDLTNTYKCSCPRGTQGVHCEINVDDCHPHLDPASRSPKCFNNGTCVDQVGGYSCTCPPGFVGERCEGDINECLSNPCDPRGTQDCVQRVNDFHCECRAGHTGRRCESVINGCRGKPCKNGGVCAVASNTARGFICRCPAGFEGATCENDARTCGSLRCLNGGTCISGPRSPTCLCLGSFTGPECQFPASSPCVGSNPCYNQGTCEPTSESPFYRCLCPAKFNGLLCHILDYSFTGGAGRDIPPPQIEEACELPECQEDAGNKVCNLQCNNHACGWDGGDCSLNFNDPWKNCTQSLQCWKYFSDGHCDSQCNSASCLFDGFDCQRTEGQCNPLYDQYCKDHFSDGHCDQGCNSAECDWDGLDCADHVPERLAAGTLVLVVLLPPEQLRNNSFHFLRELSHVLHTNVVFKRDAEGQQMIFPYYGHEEELRKHPIKRSAVGWTTSSLLPSTNGGRQRRELDPMDIRGSIVYLEIDNRQCVQSSSQCFQSATDVAAFLGALASLGNLNIPYKIEAVKSETVEPPLPSQLHLMYLAAAAFVLLFFVGCGVLLSRKRRRQHGQLWFPEGFKVSEASKKKRREPLGEDSVGLKPLKNASDGALMDDNQNEWGDEDLETKKFRFEEPVVVPDLDDQTDHRQWTQQHLDAADLRMSAMAPTPPQGEVDADCMDVNVRGPDGFTPLMIASCSGGGLETGNSEEEEDAPAVISDFIYQGASLHNQTDRTGETALHLAARYSRSDAAKRLLEASADANIQDNMGRTPLHAAVSADAQGVFQILLRNRATDLDARMHDGTTPLILAARLAVEGMLEDLINSHADVNAVDDLGKSALHWAAAVNNVDAAVVLLKNGANKDMQNNKEETPLFLAAREGSYETAKVLLDHFANRDITDHMDRLPRDIAQERMHHDIVRLLDEYNLVRSPQLHGTALGGTPTLSPTLCSPNGYLGNLKSATQGKKARKPSTKGLACGSKEAKDLKARRKKSQDGKGCLLDSSSMLSPVDSLESPHGYLSDVASPPLLPSPFQQSPSMPLSHLPGMPDTHLGISHLNVAAKPEMAALAGSSRLAFEPPPPRLPHLPVASSASTVLSTNGSXGEEEWLAPSQYNPLRPGVASGTLSTQAAGLQHGMMGPLHSSLSTNTLSPMIYQGLPNTRLATQPHLVQTQQVQPQNLQIQPQNLQPPSQPHLSVSSAANGHLGRSFLGGEHSQADVQPLGPSSLPVHTILPQESQALPTSLPSSMVPPMTTTQFLTPPSQHSYSSSPVDNTPSHQLQVPEHPFLTPSPESPDQWSSSSPHSNISDWSEGISSPPTSMPSQITHIPEAFK</sequence>
<accession>G3I6Z6</accession>
<reference key="1">
    <citation type="journal article" date="2011" name="Nat. Biotechnol.">
        <title>The genomic sequence of the Chinese hamster ovary (CHO)-K1 cell line.</title>
        <authorList>
            <person name="Xu X."/>
            <person name="Nagarajan H."/>
            <person name="Lewis N.E."/>
            <person name="Pan S."/>
            <person name="Cai Z."/>
            <person name="Liu X."/>
            <person name="Chen W."/>
            <person name="Xie M."/>
            <person name="Wang W."/>
            <person name="Hammond S."/>
            <person name="Andersen M.R."/>
            <person name="Neff N."/>
            <person name="Passarelli B."/>
            <person name="Koh W."/>
            <person name="Fan H.C."/>
            <person name="Wang J."/>
            <person name="Gui Y."/>
            <person name="Lee K.H."/>
            <person name="Betenbaugh M.J."/>
            <person name="Quake S.R."/>
            <person name="Famili I."/>
            <person name="Palsson B.O."/>
            <person name="Wang J."/>
        </authorList>
    </citation>
    <scope>NUCLEOTIDE SEQUENCE [LARGE SCALE GENOMIC DNA]</scope>
</reference>
<reference key="2">
    <citation type="journal article" date="2000" name="J. Biol. Chem.">
        <title>Mammalian Notch1 is modified with two unusual forms of O-linked glycosylation found on epidermal growth factor-like modules.</title>
        <authorList>
            <person name="Moloney D.J."/>
            <person name="Shair L.H."/>
            <person name="Lu F.M."/>
            <person name="Xia J."/>
            <person name="Locke R."/>
            <person name="Matta K.L."/>
            <person name="Haltiwanger R.S."/>
        </authorList>
    </citation>
    <scope>GLYCOSYLATION</scope>
</reference>
<name>NOTC1_CRIGR</name>
<proteinExistence type="evidence at protein level"/>
<evidence type="ECO:0000250" key="1"/>
<evidence type="ECO:0000250" key="2">
    <source>
        <dbReference type="UniProtKB" id="P46531"/>
    </source>
</evidence>
<evidence type="ECO:0000250" key="3">
    <source>
        <dbReference type="UniProtKB" id="Q01705"/>
    </source>
</evidence>
<evidence type="ECO:0000250" key="4">
    <source>
        <dbReference type="UniProtKB" id="Q07008"/>
    </source>
</evidence>
<evidence type="ECO:0000255" key="5"/>
<evidence type="ECO:0000255" key="6">
    <source>
        <dbReference type="PROSITE-ProRule" id="PRU00076"/>
    </source>
</evidence>
<evidence type="ECO:0000255" key="7">
    <source>
        <dbReference type="PROSITE-ProRule" id="PRU00525"/>
    </source>
</evidence>
<evidence type="ECO:0000256" key="8">
    <source>
        <dbReference type="SAM" id="MobiDB-lite"/>
    </source>
</evidence>
<evidence type="ECO:0000269" key="9">
    <source>
    </source>
</evidence>
<evidence type="ECO:0000305" key="10"/>
<evidence type="ECO:0000312" key="11">
    <source>
        <dbReference type="Proteomes" id="UP001108280"/>
    </source>
</evidence>
<dbReference type="EMBL" id="JH001398">
    <property type="protein sequence ID" value="EGW12778.1"/>
    <property type="molecule type" value="Genomic_DNA"/>
</dbReference>
<dbReference type="RefSeq" id="XP_003510910.1">
    <property type="nucleotide sequence ID" value="XM_003510862.3"/>
</dbReference>
<dbReference type="FunCoup" id="G3I6Z6">
    <property type="interactions" value="986"/>
</dbReference>
<dbReference type="STRING" id="10029.G3I6Z6"/>
<dbReference type="GlyCosmos" id="G3I6Z6">
    <property type="glycosylation" value="47 sites, No reported glycans"/>
</dbReference>
<dbReference type="PaxDb" id="10029-XP_007637278.1"/>
<dbReference type="eggNOG" id="KOG1217">
    <property type="taxonomic scope" value="Eukaryota"/>
</dbReference>
<dbReference type="InParanoid" id="G3I6Z6"/>
<dbReference type="Proteomes" id="UP000001075">
    <property type="component" value="Unassembled WGS sequence"/>
</dbReference>
<dbReference type="Proteomes" id="UP000694386">
    <property type="component" value="Unplaced"/>
</dbReference>
<dbReference type="Proteomes" id="UP001108280">
    <property type="component" value="Unplaced"/>
</dbReference>
<dbReference type="GO" id="GO:0005912">
    <property type="term" value="C:adherens junction"/>
    <property type="evidence" value="ECO:0000250"/>
    <property type="project" value="UniProtKB"/>
</dbReference>
<dbReference type="GO" id="GO:0016324">
    <property type="term" value="C:apical plasma membrane"/>
    <property type="evidence" value="ECO:0000250"/>
    <property type="project" value="UniProtKB"/>
</dbReference>
<dbReference type="GO" id="GO:0009986">
    <property type="term" value="C:cell surface"/>
    <property type="evidence" value="ECO:0007669"/>
    <property type="project" value="TreeGrafter"/>
</dbReference>
<dbReference type="GO" id="GO:0005796">
    <property type="term" value="C:Golgi lumen"/>
    <property type="evidence" value="ECO:0000304"/>
    <property type="project" value="Reactome"/>
</dbReference>
<dbReference type="GO" id="GO:0000139">
    <property type="term" value="C:Golgi membrane"/>
    <property type="evidence" value="ECO:0000304"/>
    <property type="project" value="Reactome"/>
</dbReference>
<dbReference type="GO" id="GO:0031902">
    <property type="term" value="C:late endosome membrane"/>
    <property type="evidence" value="ECO:0007669"/>
    <property type="project" value="UniProtKB-SubCell"/>
</dbReference>
<dbReference type="GO" id="GO:0005634">
    <property type="term" value="C:nucleus"/>
    <property type="evidence" value="ECO:0007669"/>
    <property type="project" value="UniProtKB-SubCell"/>
</dbReference>
<dbReference type="GO" id="GO:0043235">
    <property type="term" value="C:receptor complex"/>
    <property type="evidence" value="ECO:0007669"/>
    <property type="project" value="TreeGrafter"/>
</dbReference>
<dbReference type="GO" id="GO:0005509">
    <property type="term" value="F:calcium ion binding"/>
    <property type="evidence" value="ECO:0007669"/>
    <property type="project" value="InterPro"/>
</dbReference>
<dbReference type="GO" id="GO:0038023">
    <property type="term" value="F:signaling receptor activity"/>
    <property type="evidence" value="ECO:0007669"/>
    <property type="project" value="InterPro"/>
</dbReference>
<dbReference type="GO" id="GO:0001525">
    <property type="term" value="P:angiogenesis"/>
    <property type="evidence" value="ECO:0007669"/>
    <property type="project" value="UniProtKB-KW"/>
</dbReference>
<dbReference type="GO" id="GO:0007411">
    <property type="term" value="P:axon guidance"/>
    <property type="evidence" value="ECO:0007669"/>
    <property type="project" value="TreeGrafter"/>
</dbReference>
<dbReference type="GO" id="GO:0060271">
    <property type="term" value="P:cilium assembly"/>
    <property type="evidence" value="ECO:0000250"/>
    <property type="project" value="UniProtKB"/>
</dbReference>
<dbReference type="GO" id="GO:0061314">
    <property type="term" value="P:Notch signaling involved in heart development"/>
    <property type="evidence" value="ECO:0000250"/>
    <property type="project" value="UniProtKB"/>
</dbReference>
<dbReference type="GO" id="GO:0050793">
    <property type="term" value="P:regulation of developmental process"/>
    <property type="evidence" value="ECO:0007669"/>
    <property type="project" value="InterPro"/>
</dbReference>
<dbReference type="GO" id="GO:0006355">
    <property type="term" value="P:regulation of DNA-templated transcription"/>
    <property type="evidence" value="ECO:0007669"/>
    <property type="project" value="InterPro"/>
</dbReference>
<dbReference type="CDD" id="cd00054">
    <property type="entry name" value="EGF_CA"/>
    <property type="match status" value="29"/>
</dbReference>
<dbReference type="CDD" id="cd21702">
    <property type="entry name" value="JMTM_Notch1"/>
    <property type="match status" value="1"/>
</dbReference>
<dbReference type="FunFam" id="2.10.25.10:FF:000123">
    <property type="entry name" value="Crumbs homolog 1 (Drosophila)"/>
    <property type="match status" value="1"/>
</dbReference>
<dbReference type="FunFam" id="2.10.25.10:FF:000151">
    <property type="entry name" value="FAT atypical cadherin 4"/>
    <property type="match status" value="1"/>
</dbReference>
<dbReference type="FunFam" id="1.25.40.20:FF:000005">
    <property type="entry name" value="Neurogenic locus notch 1"/>
    <property type="match status" value="1"/>
</dbReference>
<dbReference type="FunFam" id="2.10.25.10:FF:000004">
    <property type="entry name" value="Neurogenic locus notch 1"/>
    <property type="match status" value="8"/>
</dbReference>
<dbReference type="FunFam" id="2.10.25.10:FF:000080">
    <property type="entry name" value="Neurogenic locus notch 1"/>
    <property type="match status" value="2"/>
</dbReference>
<dbReference type="FunFam" id="2.10.25.10:FF:000136">
    <property type="entry name" value="Neurogenic locus notch 1"/>
    <property type="match status" value="1"/>
</dbReference>
<dbReference type="FunFam" id="2.10.25.10:FF:000279">
    <property type="entry name" value="Neurogenic locus notch 1"/>
    <property type="match status" value="1"/>
</dbReference>
<dbReference type="FunFam" id="3.30.300.320:FF:000001">
    <property type="entry name" value="Neurogenic locus notch 1"/>
    <property type="match status" value="1"/>
</dbReference>
<dbReference type="FunFam" id="3.30.70.3310:FF:000003">
    <property type="entry name" value="Neurogenic locus notch 1"/>
    <property type="match status" value="1"/>
</dbReference>
<dbReference type="FunFam" id="2.10.25.10:FF:000558">
    <property type="entry name" value="Neurogenic locus notch homolog protein 1"/>
    <property type="match status" value="1"/>
</dbReference>
<dbReference type="FunFam" id="2.10.25.10:FF:000688">
    <property type="entry name" value="Neurogenic locus notch homolog protein 1"/>
    <property type="match status" value="1"/>
</dbReference>
<dbReference type="FunFam" id="2.10.25.10:FF:000955">
    <property type="entry name" value="Neurogenic locus notch homolog protein 1"/>
    <property type="match status" value="1"/>
</dbReference>
<dbReference type="FunFam" id="2.10.25.10:FF:000031">
    <property type="entry name" value="neurogenic locus notch homolog protein 3"/>
    <property type="match status" value="1"/>
</dbReference>
<dbReference type="FunFam" id="2.10.25.10:FF:000100">
    <property type="entry name" value="neurogenic locus notch homolog protein 3"/>
    <property type="match status" value="1"/>
</dbReference>
<dbReference type="FunFam" id="2.10.25.10:FF:000060">
    <property type="entry name" value="Neurogenic locus notch protein 1"/>
    <property type="match status" value="1"/>
</dbReference>
<dbReference type="FunFam" id="2.10.25.10:FF:000092">
    <property type="entry name" value="Neurogenic locus notch protein 1"/>
    <property type="match status" value="1"/>
</dbReference>
<dbReference type="FunFam" id="2.10.25.10:FF:000127">
    <property type="entry name" value="Neurogenic locus notch protein 1"/>
    <property type="match status" value="2"/>
</dbReference>
<dbReference type="FunFam" id="2.10.25.10:FF:000157">
    <property type="entry name" value="Neurogenic locus notch protein 1"/>
    <property type="match status" value="1"/>
</dbReference>
<dbReference type="FunFam" id="2.10.25.10:FF:000253">
    <property type="entry name" value="Neurogenic locus notch protein 1"/>
    <property type="match status" value="1"/>
</dbReference>
<dbReference type="FunFam" id="2.10.25.10:FF:000521">
    <property type="entry name" value="Neurogenic locus notch protein 1"/>
    <property type="match status" value="1"/>
</dbReference>
<dbReference type="FunFam" id="2.10.25.10:FF:000524">
    <property type="entry name" value="Neurogenic locus notch protein 1"/>
    <property type="match status" value="1"/>
</dbReference>
<dbReference type="FunFam" id="2.10.25.10:FF:000125">
    <property type="entry name" value="Neurogenic locus notch protein-like"/>
    <property type="match status" value="2"/>
</dbReference>
<dbReference type="FunFam" id="2.10.25.10:FF:000095">
    <property type="entry name" value="Notch, isoform B"/>
    <property type="match status" value="1"/>
</dbReference>
<dbReference type="FunFam" id="2.10.25.10:FF:000143">
    <property type="entry name" value="Protein crumbs 1"/>
    <property type="match status" value="1"/>
</dbReference>
<dbReference type="FunFam" id="2.10.25.10:FF:000146">
    <property type="entry name" value="Putative neurogenic locus notch"/>
    <property type="match status" value="1"/>
</dbReference>
<dbReference type="FunFam" id="2.10.25.10:FF:000309">
    <property type="entry name" value="Uncharacterized protein, isoform A"/>
    <property type="match status" value="1"/>
</dbReference>
<dbReference type="FunFam" id="2.10.25.10:FF:000472">
    <property type="entry name" value="Uncharacterized protein, isoform A"/>
    <property type="match status" value="1"/>
</dbReference>
<dbReference type="Gene3D" id="3.30.300.320">
    <property type="match status" value="1"/>
</dbReference>
<dbReference type="Gene3D" id="3.30.70.3310">
    <property type="match status" value="1"/>
</dbReference>
<dbReference type="Gene3D" id="1.25.40.20">
    <property type="entry name" value="Ankyrin repeat-containing domain"/>
    <property type="match status" value="1"/>
</dbReference>
<dbReference type="Gene3D" id="2.10.25.10">
    <property type="entry name" value="Laminin"/>
    <property type="match status" value="35"/>
</dbReference>
<dbReference type="InterPro" id="IPR002110">
    <property type="entry name" value="Ankyrin_rpt"/>
</dbReference>
<dbReference type="InterPro" id="IPR036770">
    <property type="entry name" value="Ankyrin_rpt-contain_sf"/>
</dbReference>
<dbReference type="InterPro" id="IPR001881">
    <property type="entry name" value="EGF-like_Ca-bd_dom"/>
</dbReference>
<dbReference type="InterPro" id="IPR013032">
    <property type="entry name" value="EGF-like_CS"/>
</dbReference>
<dbReference type="InterPro" id="IPR000742">
    <property type="entry name" value="EGF-like_dom"/>
</dbReference>
<dbReference type="InterPro" id="IPR000152">
    <property type="entry name" value="EGF-type_Asp/Asn_hydroxyl_site"/>
</dbReference>
<dbReference type="InterPro" id="IPR018097">
    <property type="entry name" value="EGF_Ca-bd_CS"/>
</dbReference>
<dbReference type="InterPro" id="IPR009030">
    <property type="entry name" value="Growth_fac_rcpt_cys_sf"/>
</dbReference>
<dbReference type="InterPro" id="IPR008297">
    <property type="entry name" value="Notch"/>
</dbReference>
<dbReference type="InterPro" id="IPR035993">
    <property type="entry name" value="Notch-like_dom_sf"/>
</dbReference>
<dbReference type="InterPro" id="IPR051355">
    <property type="entry name" value="Notch/Slit_guidance"/>
</dbReference>
<dbReference type="InterPro" id="IPR049883">
    <property type="entry name" value="NOTCH1_EGF-like"/>
</dbReference>
<dbReference type="InterPro" id="IPR022362">
    <property type="entry name" value="Notch_1"/>
</dbReference>
<dbReference type="InterPro" id="IPR024600">
    <property type="entry name" value="Notch_C"/>
</dbReference>
<dbReference type="InterPro" id="IPR000800">
    <property type="entry name" value="Notch_dom"/>
</dbReference>
<dbReference type="InterPro" id="IPR010660">
    <property type="entry name" value="Notch_NOD_dom"/>
</dbReference>
<dbReference type="InterPro" id="IPR011656">
    <property type="entry name" value="Notch_NODP_dom"/>
</dbReference>
<dbReference type="PANTHER" id="PTHR45836:SF12">
    <property type="entry name" value="NEUROGENIC LOCUS NOTCH HOMOLOG PROTEIN 1"/>
    <property type="match status" value="1"/>
</dbReference>
<dbReference type="PANTHER" id="PTHR45836">
    <property type="entry name" value="SLIT HOMOLOG"/>
    <property type="match status" value="1"/>
</dbReference>
<dbReference type="Pfam" id="PF00023">
    <property type="entry name" value="Ank"/>
    <property type="match status" value="1"/>
</dbReference>
<dbReference type="Pfam" id="PF12796">
    <property type="entry name" value="Ank_2"/>
    <property type="match status" value="2"/>
</dbReference>
<dbReference type="Pfam" id="PF00008">
    <property type="entry name" value="EGF"/>
    <property type="match status" value="17"/>
</dbReference>
<dbReference type="Pfam" id="PF07645">
    <property type="entry name" value="EGF_CA"/>
    <property type="match status" value="4"/>
</dbReference>
<dbReference type="Pfam" id="PF12661">
    <property type="entry name" value="hEGF"/>
    <property type="match status" value="8"/>
</dbReference>
<dbReference type="Pfam" id="PF06816">
    <property type="entry name" value="NOD"/>
    <property type="match status" value="1"/>
</dbReference>
<dbReference type="Pfam" id="PF07684">
    <property type="entry name" value="NODP"/>
    <property type="match status" value="1"/>
</dbReference>
<dbReference type="Pfam" id="PF00066">
    <property type="entry name" value="Notch"/>
    <property type="match status" value="3"/>
</dbReference>
<dbReference type="PIRSF" id="PIRSF002279">
    <property type="entry name" value="Notch"/>
    <property type="match status" value="1"/>
</dbReference>
<dbReference type="PRINTS" id="PR01452">
    <property type="entry name" value="LNOTCHREPEAT"/>
</dbReference>
<dbReference type="PRINTS" id="PR01983">
    <property type="entry name" value="NOTCH"/>
</dbReference>
<dbReference type="PRINTS" id="PR01984">
    <property type="entry name" value="NOTCH1"/>
</dbReference>
<dbReference type="SMART" id="SM00248">
    <property type="entry name" value="ANK"/>
    <property type="match status" value="6"/>
</dbReference>
<dbReference type="SMART" id="SM01334">
    <property type="entry name" value="DUF3454"/>
    <property type="match status" value="1"/>
</dbReference>
<dbReference type="SMART" id="SM00181">
    <property type="entry name" value="EGF"/>
    <property type="match status" value="36"/>
</dbReference>
<dbReference type="SMART" id="SM00179">
    <property type="entry name" value="EGF_CA"/>
    <property type="match status" value="33"/>
</dbReference>
<dbReference type="SMART" id="SM00004">
    <property type="entry name" value="NL"/>
    <property type="match status" value="3"/>
</dbReference>
<dbReference type="SMART" id="SM01338">
    <property type="entry name" value="NOD"/>
    <property type="match status" value="1"/>
</dbReference>
<dbReference type="SMART" id="SM01339">
    <property type="entry name" value="NODP"/>
    <property type="match status" value="1"/>
</dbReference>
<dbReference type="SUPFAM" id="SSF48403">
    <property type="entry name" value="Ankyrin repeat"/>
    <property type="match status" value="1"/>
</dbReference>
<dbReference type="SUPFAM" id="SSF57196">
    <property type="entry name" value="EGF/Laminin"/>
    <property type="match status" value="18"/>
</dbReference>
<dbReference type="SUPFAM" id="SSF57184">
    <property type="entry name" value="Growth factor receptor domain"/>
    <property type="match status" value="5"/>
</dbReference>
<dbReference type="SUPFAM" id="SSF90193">
    <property type="entry name" value="Notch domain"/>
    <property type="match status" value="3"/>
</dbReference>
<dbReference type="PROSITE" id="PS50297">
    <property type="entry name" value="ANK_REP_REGION"/>
    <property type="match status" value="1"/>
</dbReference>
<dbReference type="PROSITE" id="PS50088">
    <property type="entry name" value="ANK_REPEAT"/>
    <property type="match status" value="4"/>
</dbReference>
<dbReference type="PROSITE" id="PS00010">
    <property type="entry name" value="ASX_HYDROXYL"/>
    <property type="match status" value="22"/>
</dbReference>
<dbReference type="PROSITE" id="PS00022">
    <property type="entry name" value="EGF_1"/>
    <property type="match status" value="35"/>
</dbReference>
<dbReference type="PROSITE" id="PS01186">
    <property type="entry name" value="EGF_2"/>
    <property type="match status" value="28"/>
</dbReference>
<dbReference type="PROSITE" id="PS50026">
    <property type="entry name" value="EGF_3"/>
    <property type="match status" value="36"/>
</dbReference>
<dbReference type="PROSITE" id="PS01187">
    <property type="entry name" value="EGF_CA"/>
    <property type="match status" value="21"/>
</dbReference>
<dbReference type="PROSITE" id="PS50258">
    <property type="entry name" value="LNR"/>
    <property type="match status" value="3"/>
</dbReference>
<protein>
    <recommendedName>
        <fullName>Neurogenic locus notch homolog protein 1</fullName>
        <shortName>Notch 1</shortName>
    </recommendedName>
    <component>
        <recommendedName>
            <fullName>Notch 1 extracellular truncation</fullName>
            <shortName>NEXT</shortName>
        </recommendedName>
    </component>
    <component>
        <recommendedName>
            <fullName>Notch 1 intracellular domain</fullName>
            <shortName>NICD</shortName>
        </recommendedName>
    </component>
</protein>
<keyword id="KW-0010">Activator</keyword>
<keyword id="KW-0037">Angiogenesis</keyword>
<keyword id="KW-0040">ANK repeat</keyword>
<keyword id="KW-0106">Calcium</keyword>
<keyword id="KW-1003">Cell membrane</keyword>
<keyword id="KW-0217">Developmental protein</keyword>
<keyword id="KW-0221">Differentiation</keyword>
<keyword id="KW-1015">Disulfide bond</keyword>
<keyword id="KW-0245">EGF-like domain</keyword>
<keyword id="KW-0967">Endosome</keyword>
<keyword id="KW-0325">Glycoprotein</keyword>
<keyword id="KW-0379">Hydroxylation</keyword>
<keyword id="KW-1017">Isopeptide bond</keyword>
<keyword id="KW-0472">Membrane</keyword>
<keyword id="KW-0479">Metal-binding</keyword>
<keyword id="KW-0914">Notch signaling pathway</keyword>
<keyword id="KW-0539">Nucleus</keyword>
<keyword id="KW-0597">Phosphoprotein</keyword>
<keyword id="KW-0675">Receptor</keyword>
<keyword id="KW-1185">Reference proteome</keyword>
<keyword id="KW-0677">Repeat</keyword>
<keyword id="KW-0732">Signal</keyword>
<keyword id="KW-0804">Transcription</keyword>
<keyword id="KW-0805">Transcription regulation</keyword>
<keyword id="KW-0812">Transmembrane</keyword>
<keyword id="KW-1133">Transmembrane helix</keyword>
<keyword id="KW-0832">Ubl conjugation</keyword>
<organism evidence="11">
    <name type="scientific">Cricetulus griseus</name>
    <name type="common">Chinese hamster</name>
    <name type="synonym">Cricetulus barabensis griseus</name>
    <dbReference type="NCBI Taxonomy" id="10029"/>
    <lineage>
        <taxon>Eukaryota</taxon>
        <taxon>Metazoa</taxon>
        <taxon>Chordata</taxon>
        <taxon>Craniata</taxon>
        <taxon>Vertebrata</taxon>
        <taxon>Euteleostomi</taxon>
        <taxon>Mammalia</taxon>
        <taxon>Eutheria</taxon>
        <taxon>Euarchontoglires</taxon>
        <taxon>Glires</taxon>
        <taxon>Rodentia</taxon>
        <taxon>Myomorpha</taxon>
        <taxon>Muroidea</taxon>
        <taxon>Cricetidae</taxon>
        <taxon>Cricetinae</taxon>
        <taxon>Cricetulus</taxon>
    </lineage>
</organism>
<feature type="signal peptide" evidence="5">
    <location>
        <begin position="1"/>
        <end position="36"/>
    </location>
</feature>
<feature type="chain" id="PRO_0000424013" description="Neurogenic locus notch homolog protein 1">
    <location>
        <begin position="37"/>
        <end position="2527"/>
    </location>
</feature>
<feature type="chain" id="PRO_0000424014" description="Notch 1 extracellular truncation" evidence="1">
    <location>
        <begin position="1727"/>
        <end position="2527"/>
    </location>
</feature>
<feature type="chain" id="PRO_0000424015" description="Notch 1 intracellular domain" evidence="1">
    <location>
        <begin position="1760"/>
        <end position="2527"/>
    </location>
</feature>
<feature type="topological domain" description="Extracellular" evidence="10">
    <location>
        <begin position="37"/>
        <end position="1741"/>
    </location>
</feature>
<feature type="transmembrane region" description="Helical" evidence="2">
    <location>
        <begin position="1742"/>
        <end position="1762"/>
    </location>
</feature>
<feature type="topological domain" description="Cytoplasmic" evidence="10">
    <location>
        <begin position="1763"/>
        <end position="2527"/>
    </location>
</feature>
<feature type="domain" description="EGF-like 1" evidence="6">
    <location>
        <begin position="75"/>
        <end position="115"/>
    </location>
</feature>
<feature type="domain" description="EGF-like 2" evidence="6">
    <location>
        <begin position="118"/>
        <end position="155"/>
    </location>
</feature>
<feature type="domain" description="EGF-like 3" evidence="6">
    <location>
        <begin position="156"/>
        <end position="192"/>
    </location>
</feature>
<feature type="domain" description="EGF-like 4; calcium-binding" evidence="6">
    <location>
        <begin position="194"/>
        <end position="232"/>
    </location>
</feature>
<feature type="domain" description="EGF-like 5" evidence="6">
    <location>
        <begin position="234"/>
        <end position="271"/>
    </location>
</feature>
<feature type="domain" description="EGF-like 6; calcium-binding" evidence="6">
    <location>
        <begin position="273"/>
        <end position="309"/>
    </location>
</feature>
<feature type="domain" description="EGF-like 7; calcium-binding" evidence="6">
    <location>
        <begin position="311"/>
        <end position="349"/>
    </location>
</feature>
<feature type="domain" description="EGF-like 8; calcium-binding" evidence="6">
    <location>
        <begin position="351"/>
        <end position="387"/>
    </location>
</feature>
<feature type="domain" description="EGF-like 9" evidence="6">
    <location>
        <begin position="388"/>
        <end position="426"/>
    </location>
</feature>
<feature type="domain" description="EGF-like 10; calcium-binding" evidence="6">
    <location>
        <begin position="428"/>
        <end position="466"/>
    </location>
</feature>
<feature type="domain" description="EGF-like 11; calcium-binding" evidence="6">
    <location>
        <begin position="468"/>
        <end position="504"/>
    </location>
</feature>
<feature type="domain" description="EGF-like 12; calcium-binding" evidence="6">
    <location>
        <begin position="506"/>
        <end position="542"/>
    </location>
</feature>
<feature type="domain" description="EGF-like 13; calcium-binding" evidence="6">
    <location>
        <begin position="544"/>
        <end position="580"/>
    </location>
</feature>
<feature type="domain" description="EGF-like 14; calcium-binding" evidence="6">
    <location>
        <begin position="582"/>
        <end position="617"/>
    </location>
</feature>
<feature type="domain" description="EGF-like 15; calcium-binding" evidence="6">
    <location>
        <begin position="619"/>
        <end position="655"/>
    </location>
</feature>
<feature type="domain" description="EGF-like 16; calcium-binding" evidence="6">
    <location>
        <begin position="657"/>
        <end position="692"/>
    </location>
</feature>
<feature type="domain" description="EGF-like 17; calcium-binding" evidence="6">
    <location>
        <begin position="694"/>
        <end position="730"/>
    </location>
</feature>
<feature type="domain" description="EGF-like 18; calcium-binding" evidence="6">
    <location>
        <begin position="732"/>
        <end position="767"/>
    </location>
</feature>
<feature type="domain" description="EGF-like 19" evidence="6">
    <location>
        <begin position="769"/>
        <end position="805"/>
    </location>
</feature>
<feature type="domain" description="EGF-like 20; calcium-binding" evidence="6">
    <location>
        <begin position="807"/>
        <end position="843"/>
    </location>
</feature>
<feature type="domain" description="EGF-like 21" evidence="6">
    <location>
        <begin position="845"/>
        <end position="883"/>
    </location>
</feature>
<feature type="domain" description="EGF-like 22; calcium-binding" evidence="6">
    <location>
        <begin position="885"/>
        <end position="921"/>
    </location>
</feature>
<feature type="domain" description="EGF-like 23" evidence="6">
    <location>
        <begin position="923"/>
        <end position="959"/>
    </location>
</feature>
<feature type="domain" description="EGF-like 24; calcium-binding" evidence="6">
    <location>
        <begin position="961"/>
        <end position="997"/>
    </location>
</feature>
<feature type="domain" description="EGF-like 25" evidence="6">
    <location>
        <begin position="999"/>
        <end position="1035"/>
    </location>
</feature>
<feature type="domain" description="EGF-like 26" evidence="6">
    <location>
        <begin position="1037"/>
        <end position="1073"/>
    </location>
</feature>
<feature type="domain" description="EGF-like 27" evidence="6">
    <location>
        <begin position="1075"/>
        <end position="1111"/>
    </location>
</feature>
<feature type="domain" description="EGF-like 28" evidence="10">
    <location>
        <begin position="1113"/>
        <end position="1159"/>
    </location>
</feature>
<feature type="domain" description="EGF-like 29" evidence="6">
    <location>
        <begin position="1161"/>
        <end position="1197"/>
    </location>
</feature>
<feature type="domain" description="EGF-like 30; calcium-binding" evidence="6">
    <location>
        <begin position="1199"/>
        <end position="1235"/>
    </location>
</feature>
<feature type="domain" description="EGF-like 31; calcium-binding" evidence="6">
    <location>
        <begin position="1237"/>
        <end position="1281"/>
    </location>
</feature>
<feature type="domain" description="EGF-like 32" evidence="6">
    <location>
        <begin position="1283"/>
        <end position="1321"/>
    </location>
</feature>
<feature type="domain" description="EGF-like 33" evidence="6">
    <location>
        <begin position="1323"/>
        <end position="1362"/>
    </location>
</feature>
<feature type="domain" description="EGF-like 34" evidence="6">
    <location>
        <begin position="1364"/>
        <end position="1400"/>
    </location>
</feature>
<feature type="domain" description="EGF-like 35" evidence="6">
    <location>
        <begin position="1403"/>
        <end position="1442"/>
    </location>
</feature>
<feature type="repeat" description="LNR 1">
    <location>
        <begin position="1465"/>
        <end position="1505"/>
    </location>
</feature>
<feature type="repeat" description="LNR 2">
    <location>
        <begin position="1506"/>
        <end position="1547"/>
    </location>
</feature>
<feature type="repeat" description="LNR 3">
    <location>
        <begin position="1548"/>
        <end position="1587"/>
    </location>
</feature>
<feature type="repeat" description="ANK 1">
    <location>
        <begin position="1933"/>
        <end position="1962"/>
    </location>
</feature>
<feature type="repeat" description="ANK 2">
    <location>
        <begin position="1966"/>
        <end position="1996"/>
    </location>
</feature>
<feature type="repeat" description="ANK 3">
    <location>
        <begin position="2000"/>
        <end position="2029"/>
    </location>
</feature>
<feature type="repeat" description="ANK 4">
    <location>
        <begin position="2033"/>
        <end position="2062"/>
    </location>
</feature>
<feature type="repeat" description="ANK 5">
    <location>
        <begin position="2066"/>
        <end position="2095"/>
    </location>
</feature>
<feature type="region of interest" description="Interaction with DLL4" evidence="4">
    <location>
        <begin position="436"/>
        <end position="437"/>
    </location>
</feature>
<feature type="region of interest" description="Interaction with DLL4" evidence="4">
    <location>
        <begin position="464"/>
        <end position="468"/>
    </location>
</feature>
<feature type="region of interest" description="Interaction with PSEN1" evidence="2">
    <location>
        <begin position="1734"/>
        <end position="1766"/>
    </location>
</feature>
<feature type="region of interest" description="Disordered" evidence="8">
    <location>
        <begin position="1786"/>
        <end position="1814"/>
    </location>
</feature>
<feature type="region of interest" description="HIF1AN-binding" evidence="1">
    <location>
        <begin position="1953"/>
        <end position="1961"/>
    </location>
</feature>
<feature type="region of interest" description="HIF1AN-binding" evidence="1">
    <location>
        <begin position="2020"/>
        <end position="2028"/>
    </location>
</feature>
<feature type="region of interest" description="Disordered" evidence="8">
    <location>
        <begin position="2157"/>
        <end position="2201"/>
    </location>
</feature>
<feature type="region of interest" description="Disordered" evidence="8">
    <location>
        <begin position="2378"/>
        <end position="2424"/>
    </location>
</feature>
<feature type="region of interest" description="Disordered" evidence="8">
    <location>
        <begin position="2436"/>
        <end position="2527"/>
    </location>
</feature>
<feature type="compositionally biased region" description="Low complexity" evidence="8">
    <location>
        <begin position="2378"/>
        <end position="2391"/>
    </location>
</feature>
<feature type="compositionally biased region" description="Polar residues" evidence="8">
    <location>
        <begin position="2436"/>
        <end position="2474"/>
    </location>
</feature>
<feature type="compositionally biased region" description="Low complexity" evidence="8">
    <location>
        <begin position="2484"/>
        <end position="2499"/>
    </location>
</feature>
<feature type="compositionally biased region" description="Polar residues" evidence="8">
    <location>
        <begin position="2500"/>
        <end position="2520"/>
    </location>
</feature>
<feature type="binding site" evidence="4">
    <location>
        <position position="448"/>
    </location>
    <ligand>
        <name>Ca(2+)</name>
        <dbReference type="ChEBI" id="CHEBI:29108"/>
        <label>1</label>
    </ligand>
</feature>
<feature type="binding site" evidence="4">
    <location>
        <position position="451"/>
    </location>
    <ligand>
        <name>Ca(2+)</name>
        <dbReference type="ChEBI" id="CHEBI:29108"/>
        <label>1</label>
    </ligand>
</feature>
<feature type="binding site" evidence="4">
    <location>
        <position position="468"/>
    </location>
    <ligand>
        <name>Ca(2+)</name>
        <dbReference type="ChEBI" id="CHEBI:29108"/>
        <label>2</label>
    </ligand>
</feature>
<feature type="binding site" evidence="4">
    <location>
        <position position="469"/>
    </location>
    <ligand>
        <name>Ca(2+)</name>
        <dbReference type="ChEBI" id="CHEBI:29108"/>
        <label>2</label>
    </ligand>
</feature>
<feature type="binding site" evidence="4">
    <location>
        <position position="471"/>
    </location>
    <ligand>
        <name>Ca(2+)</name>
        <dbReference type="ChEBI" id="CHEBI:29108"/>
        <label>2</label>
    </ligand>
</feature>
<feature type="binding site" evidence="4">
    <location>
        <position position="485"/>
    </location>
    <ligand>
        <name>Ca(2+)</name>
        <dbReference type="ChEBI" id="CHEBI:29108"/>
        <label>2</label>
    </ligand>
</feature>
<feature type="binding site" evidence="4">
    <location>
        <position position="486"/>
    </location>
    <ligand>
        <name>Ca(2+)</name>
        <dbReference type="ChEBI" id="CHEBI:29108"/>
        <label>2</label>
    </ligand>
</feature>
<feature type="binding site" evidence="4">
    <location>
        <position position="506"/>
    </location>
    <ligand>
        <name>Ca(2+)</name>
        <dbReference type="ChEBI" id="CHEBI:29108"/>
        <label>3</label>
    </ligand>
</feature>
<feature type="binding site" evidence="4">
    <location>
        <position position="507"/>
    </location>
    <ligand>
        <name>Ca(2+)</name>
        <dbReference type="ChEBI" id="CHEBI:29108"/>
        <label>3</label>
    </ligand>
</feature>
<feature type="binding site" evidence="4">
    <location>
        <position position="509"/>
    </location>
    <ligand>
        <name>Ca(2+)</name>
        <dbReference type="ChEBI" id="CHEBI:29108"/>
        <label>3</label>
    </ligand>
</feature>
<feature type="binding site" evidence="4">
    <location>
        <position position="523"/>
    </location>
    <ligand>
        <name>Ca(2+)</name>
        <dbReference type="ChEBI" id="CHEBI:29108"/>
        <label>3</label>
    </ligand>
</feature>
<feature type="binding site" evidence="4">
    <location>
        <position position="524"/>
    </location>
    <ligand>
        <name>Ca(2+)</name>
        <dbReference type="ChEBI" id="CHEBI:29108"/>
        <label>3</label>
    </ligand>
</feature>
<feature type="binding site" evidence="7">
    <location>
        <position position="1473"/>
    </location>
    <ligand>
        <name>Ca(2+)</name>
        <dbReference type="ChEBI" id="CHEBI:29108"/>
        <label>4</label>
    </ligand>
</feature>
<feature type="binding site" evidence="7">
    <location>
        <position position="1476"/>
    </location>
    <ligand>
        <name>Ca(2+)</name>
        <dbReference type="ChEBI" id="CHEBI:29108"/>
        <label>4</label>
    </ligand>
</feature>
<feature type="binding site" evidence="7">
    <location>
        <position position="1491"/>
    </location>
    <ligand>
        <name>Ca(2+)</name>
        <dbReference type="ChEBI" id="CHEBI:29108"/>
        <label>4</label>
    </ligand>
</feature>
<feature type="binding site" evidence="7">
    <location>
        <position position="1494"/>
    </location>
    <ligand>
        <name>Ca(2+)</name>
        <dbReference type="ChEBI" id="CHEBI:29108"/>
        <label>4</label>
    </ligand>
</feature>
<feature type="site" description="Interaction with DLL4" evidence="4">
    <location>
        <position position="485"/>
    </location>
</feature>
<feature type="site" description="Cleavage; by furin-like protease" evidence="3">
    <location>
        <begin position="1670"/>
        <end position="1671"/>
    </location>
</feature>
<feature type="site" description="Cleavage; by ADAM17" evidence="3">
    <location>
        <begin position="1726"/>
        <end position="1727"/>
    </location>
</feature>
<feature type="modified residue" description="Phosphothreonine" evidence="3">
    <location>
        <position position="1867"/>
    </location>
</feature>
<feature type="modified residue" description="(3S)-3-hydroxyasparagine; by HIF1AN; partial" evidence="1">
    <location>
        <position position="1961"/>
    </location>
</feature>
<feature type="modified residue" description="(3S)-3-hydroxyasparagine; by HIF1AN" evidence="1">
    <location>
        <position position="2028"/>
    </location>
</feature>
<feature type="glycosylation site" description="N-linked (GlcNAc...) asparagine" evidence="5">
    <location>
        <position position="57"/>
    </location>
</feature>
<feature type="glycosylation site" description="O-linked (Glc...) serine" evidence="3">
    <location>
        <position position="81"/>
    </location>
</feature>
<feature type="glycosylation site" description="O-linked (Fuc...) threonine" evidence="3">
    <location>
        <position position="89"/>
    </location>
</feature>
<feature type="glycosylation site" description="O-linked (Fuc...) threonine" evidence="3">
    <location>
        <position position="132"/>
    </location>
</feature>
<feature type="glycosylation site" description="O-linked (Glc...) serine" evidence="3">
    <location>
        <position position="162"/>
    </location>
</feature>
<feature type="glycosylation site" description="O-linked (Fuc...) threonine" evidence="3">
    <location>
        <position position="210"/>
    </location>
</feature>
<feature type="glycosylation site" description="O-linked (Fuc...) threonine; alternate" evidence="3">
    <location>
        <position position="248"/>
    </location>
</feature>
<feature type="glycosylation site" description="O-linked (GalNAc...) threonine; alternate" evidence="3">
    <location>
        <position position="248"/>
    </location>
</feature>
<feature type="glycosylation site" description="O-linked (Fuc...) threonine" evidence="3">
    <location>
        <position position="327"/>
    </location>
</feature>
<feature type="glycosylation site" description="O-linked (Glc...) serine" evidence="3">
    <location>
        <position position="357"/>
    </location>
</feature>
<feature type="glycosylation site" description="O-linked (Fuc...) threonine" evidence="3">
    <location>
        <position position="365"/>
    </location>
</feature>
<feature type="glycosylation site" description="O-linked (Glc...) serine" evidence="3">
    <location>
        <position position="394"/>
    </location>
</feature>
<feature type="glycosylation site" description="O-linked (Glc...) serine" evidence="4">
    <location>
        <position position="451"/>
    </location>
</feature>
<feature type="glycosylation site" description="O-linked (Glc...) serine" evidence="4">
    <location>
        <position position="474"/>
    </location>
</feature>
<feature type="glycosylation site" description="O-linked (Fuc...) threonine" evidence="4">
    <location>
        <position position="482"/>
    </location>
</feature>
<feature type="glycosylation site" description="O-linked (Glc...) serine" evidence="4">
    <location>
        <position position="512"/>
    </location>
</feature>
<feature type="glycosylation site" description="O-linked (Glc...) serine" evidence="3">
    <location>
        <position position="550"/>
    </location>
</feature>
<feature type="glycosylation site" description="O-linked (Glc...) serine" evidence="3">
    <location>
        <position position="625"/>
    </location>
</feature>
<feature type="glycosylation site" description="O-linked (Fuc...) threonine" evidence="3">
    <location>
        <position position="633"/>
    </location>
</feature>
<feature type="glycosylation site" description="O-linked (Glc...) serine" evidence="3">
    <location>
        <position position="663"/>
    </location>
</feature>
<feature type="glycosylation site" description="O-linked (Fuc...) threonine" evidence="3">
    <location>
        <position position="708"/>
    </location>
</feature>
<feature type="glycosylation site" description="O-linked (Glc...) serine" evidence="3">
    <location>
        <position position="738"/>
    </location>
</feature>
<feature type="glycosylation site" description="O-linked (Glc...) serine" evidence="3">
    <location>
        <position position="775"/>
    </location>
</feature>
<feature type="glycosylation site" description="O-linked (Fuc...) threonine" evidence="3">
    <location>
        <position position="783"/>
    </location>
</feature>
<feature type="glycosylation site" description="O-linked (GlcNAc) serine" evidence="3">
    <location>
        <position position="800"/>
    </location>
</feature>
<feature type="glycosylation site" description="O-linked (Glc...) serine" evidence="3">
    <location>
        <position position="813"/>
    </location>
</feature>
<feature type="glycosylation site" description="O-linked (Fuc...) threonine" evidence="3">
    <location>
        <position position="821"/>
    </location>
</feature>
<feature type="glycosylation site" description="N-linked (GlcNAc...) asparagine" evidence="5">
    <location>
        <position position="904"/>
    </location>
</feature>
<feature type="glycosylation site" description="O-linked (GlcNAc) threonine" evidence="3">
    <location>
        <position position="916"/>
    </location>
</feature>
<feature type="glycosylation site" description="O-linked (Fuc) serine" evidence="3">
    <location>
        <position position="937"/>
    </location>
</feature>
<feature type="glycosylation site" description="O-linked (Glc...) serine" evidence="3">
    <location>
        <position position="967"/>
    </location>
</feature>
<feature type="glycosylation site" description="N-linked (GlcNAc...) asparagine" evidence="5">
    <location>
        <position position="975"/>
    </location>
</feature>
<feature type="glycosylation site" description="O-linked (Fuc...) threonine" evidence="3">
    <location>
        <position position="1013"/>
    </location>
</feature>
<feature type="glycosylation site" description="O-linked (Glc...) serine" evidence="3">
    <location>
        <position position="1043"/>
    </location>
</feature>
<feature type="glycosylation site" description="O-linked (Fuc...) threonine" evidence="3">
    <location>
        <position position="1051"/>
    </location>
</feature>
<feature type="glycosylation site" description="O-linked (Glc...) serine" evidence="3">
    <location>
        <position position="1081"/>
    </location>
</feature>
<feature type="glycosylation site" description="O-linked (Fuc...) threonine" evidence="3">
    <location>
        <position position="1175"/>
    </location>
</feature>
<feature type="glycosylation site" description="N-linked (GlcNAc...) asparagine" evidence="5">
    <location>
        <position position="1195"/>
    </location>
</feature>
<feature type="glycosylation site" description="O-linked (Glc...) serine" evidence="3">
    <location>
        <position position="1205"/>
    </location>
</feature>
<feature type="glycosylation site" description="O-linked (Fuc...) threonine" evidence="3">
    <location>
        <position position="1213"/>
    </location>
</feature>
<feature type="glycosylation site" description="N-linked (GlcNAc...) asparagine" evidence="5">
    <location>
        <position position="1257"/>
    </location>
</feature>
<feature type="glycosylation site" description="O-linked (Glc...) serine" evidence="3">
    <location>
        <position position="1289"/>
    </location>
</feature>
<feature type="glycosylation site" description="O-linked (Fuc...) threonine" evidence="3">
    <location>
        <position position="1378"/>
    </location>
</feature>
<feature type="glycosylation site" description="O-linked (GlcNAc...) threonine" evidence="3">
    <location>
        <position position="1395"/>
    </location>
</feature>
<feature type="glycosylation site" description="O-linked (Fuc...) threonine; alternate" evidence="3">
    <location>
        <position position="1418"/>
    </location>
</feature>
<feature type="glycosylation site" description="O-linked (GalNAc...) threonine; alternate" evidence="3">
    <location>
        <position position="1418"/>
    </location>
</feature>
<feature type="glycosylation site" description="N-linked (GlcNAc...) asparagine" evidence="5">
    <location>
        <position position="1505"/>
    </location>
</feature>
<feature type="glycosylation site" description="N-linked (GlcNAc...) asparagine" evidence="5">
    <location>
        <position position="1603"/>
    </location>
</feature>
<feature type="glycosylation site" description="O-linked (GalNAc...) threonine" evidence="2">
    <location>
        <position position="1731"/>
    </location>
</feature>
<feature type="disulfide bond" evidence="1">
    <location>
        <begin position="40"/>
        <end position="53"/>
    </location>
</feature>
<feature type="disulfide bond" evidence="1">
    <location>
        <begin position="47"/>
        <end position="62"/>
    </location>
</feature>
<feature type="disulfide bond" evidence="1">
    <location>
        <begin position="64"/>
        <end position="73"/>
    </location>
</feature>
<feature type="disulfide bond" evidence="1">
    <location>
        <begin position="79"/>
        <end position="90"/>
    </location>
</feature>
<feature type="disulfide bond" evidence="1">
    <location>
        <begin position="84"/>
        <end position="103"/>
    </location>
</feature>
<feature type="disulfide bond" evidence="1">
    <location>
        <begin position="105"/>
        <end position="114"/>
    </location>
</feature>
<feature type="disulfide bond" evidence="1">
    <location>
        <begin position="122"/>
        <end position="133"/>
    </location>
</feature>
<feature type="disulfide bond" evidence="1">
    <location>
        <begin position="127"/>
        <end position="143"/>
    </location>
</feature>
<feature type="disulfide bond" evidence="1">
    <location>
        <begin position="145"/>
        <end position="154"/>
    </location>
</feature>
<feature type="disulfide bond" evidence="1">
    <location>
        <begin position="160"/>
        <end position="171"/>
    </location>
</feature>
<feature type="disulfide bond" evidence="1">
    <location>
        <begin position="165"/>
        <end position="180"/>
    </location>
</feature>
<feature type="disulfide bond" evidence="1">
    <location>
        <begin position="182"/>
        <end position="191"/>
    </location>
</feature>
<feature type="disulfide bond" evidence="1">
    <location>
        <begin position="198"/>
        <end position="211"/>
    </location>
</feature>
<feature type="disulfide bond" evidence="1">
    <location>
        <begin position="205"/>
        <end position="220"/>
    </location>
</feature>
<feature type="disulfide bond" evidence="1">
    <location>
        <begin position="222"/>
        <end position="231"/>
    </location>
</feature>
<feature type="disulfide bond" evidence="1">
    <location>
        <begin position="238"/>
        <end position="249"/>
    </location>
</feature>
<feature type="disulfide bond" evidence="1">
    <location>
        <begin position="243"/>
        <end position="259"/>
    </location>
</feature>
<feature type="disulfide bond" evidence="1">
    <location>
        <begin position="261"/>
        <end position="270"/>
    </location>
</feature>
<feature type="disulfide bond" evidence="1">
    <location>
        <begin position="277"/>
        <end position="288"/>
    </location>
</feature>
<feature type="disulfide bond" evidence="1">
    <location>
        <begin position="282"/>
        <end position="297"/>
    </location>
</feature>
<feature type="disulfide bond" evidence="1">
    <location>
        <begin position="299"/>
        <end position="308"/>
    </location>
</feature>
<feature type="disulfide bond" evidence="1">
    <location>
        <begin position="315"/>
        <end position="328"/>
    </location>
</feature>
<feature type="disulfide bond" evidence="1">
    <location>
        <begin position="322"/>
        <end position="337"/>
    </location>
</feature>
<feature type="disulfide bond" evidence="1">
    <location>
        <begin position="339"/>
        <end position="348"/>
    </location>
</feature>
<feature type="disulfide bond" evidence="1">
    <location>
        <begin position="355"/>
        <end position="366"/>
    </location>
</feature>
<feature type="disulfide bond" evidence="1">
    <location>
        <begin position="360"/>
        <end position="375"/>
    </location>
</feature>
<feature type="disulfide bond" evidence="1">
    <location>
        <begin position="377"/>
        <end position="386"/>
    </location>
</feature>
<feature type="disulfide bond" evidence="1">
    <location>
        <begin position="392"/>
        <end position="403"/>
    </location>
</feature>
<feature type="disulfide bond" evidence="1">
    <location>
        <begin position="397"/>
        <end position="414"/>
    </location>
</feature>
<feature type="disulfide bond" evidence="1">
    <location>
        <begin position="416"/>
        <end position="425"/>
    </location>
</feature>
<feature type="disulfide bond" evidence="4">
    <location>
        <begin position="432"/>
        <end position="445"/>
    </location>
</feature>
<feature type="disulfide bond" evidence="4">
    <location>
        <begin position="439"/>
        <end position="454"/>
    </location>
</feature>
<feature type="disulfide bond" evidence="4">
    <location>
        <begin position="456"/>
        <end position="465"/>
    </location>
</feature>
<feature type="disulfide bond" evidence="4">
    <location>
        <begin position="472"/>
        <end position="483"/>
    </location>
</feature>
<feature type="disulfide bond" evidence="4">
    <location>
        <begin position="477"/>
        <end position="492"/>
    </location>
</feature>
<feature type="disulfide bond" evidence="4">
    <location>
        <begin position="494"/>
        <end position="503"/>
    </location>
</feature>
<feature type="disulfide bond" evidence="4">
    <location>
        <begin position="510"/>
        <end position="521"/>
    </location>
</feature>
<feature type="disulfide bond" evidence="4">
    <location>
        <begin position="515"/>
        <end position="530"/>
    </location>
</feature>
<feature type="disulfide bond" evidence="4">
    <location>
        <begin position="532"/>
        <end position="541"/>
    </location>
</feature>
<feature type="disulfide bond" evidence="1">
    <location>
        <begin position="548"/>
        <end position="559"/>
    </location>
</feature>
<feature type="disulfide bond" evidence="1">
    <location>
        <begin position="553"/>
        <end position="568"/>
    </location>
</feature>
<feature type="disulfide bond" evidence="1">
    <location>
        <begin position="570"/>
        <end position="579"/>
    </location>
</feature>
<feature type="disulfide bond" evidence="1">
    <location>
        <begin position="586"/>
        <end position="596"/>
    </location>
</feature>
<feature type="disulfide bond" evidence="1">
    <location>
        <begin position="591"/>
        <end position="605"/>
    </location>
</feature>
<feature type="disulfide bond" evidence="1">
    <location>
        <begin position="607"/>
        <end position="616"/>
    </location>
</feature>
<feature type="disulfide bond" evidence="1">
    <location>
        <begin position="623"/>
        <end position="634"/>
    </location>
</feature>
<feature type="disulfide bond" evidence="1">
    <location>
        <begin position="628"/>
        <end position="643"/>
    </location>
</feature>
<feature type="disulfide bond" evidence="1">
    <location>
        <begin position="645"/>
        <end position="654"/>
    </location>
</feature>
<feature type="disulfide bond" evidence="1">
    <location>
        <begin position="661"/>
        <end position="671"/>
    </location>
</feature>
<feature type="disulfide bond" evidence="1">
    <location>
        <begin position="666"/>
        <end position="680"/>
    </location>
</feature>
<feature type="disulfide bond" evidence="1">
    <location>
        <begin position="682"/>
        <end position="691"/>
    </location>
</feature>
<feature type="disulfide bond" evidence="1">
    <location>
        <begin position="698"/>
        <end position="709"/>
    </location>
</feature>
<feature type="disulfide bond" evidence="1">
    <location>
        <begin position="703"/>
        <end position="718"/>
    </location>
</feature>
<feature type="disulfide bond" evidence="1">
    <location>
        <begin position="720"/>
        <end position="729"/>
    </location>
</feature>
<feature type="disulfide bond" evidence="1">
    <location>
        <begin position="736"/>
        <end position="746"/>
    </location>
</feature>
<feature type="disulfide bond" evidence="1">
    <location>
        <begin position="741"/>
        <end position="755"/>
    </location>
</feature>
<feature type="disulfide bond" evidence="1">
    <location>
        <begin position="757"/>
        <end position="766"/>
    </location>
</feature>
<feature type="disulfide bond" evidence="1">
    <location>
        <begin position="773"/>
        <end position="784"/>
    </location>
</feature>
<feature type="disulfide bond" evidence="1">
    <location>
        <begin position="778"/>
        <end position="793"/>
    </location>
</feature>
<feature type="disulfide bond" evidence="1">
    <location>
        <begin position="795"/>
        <end position="804"/>
    </location>
</feature>
<feature type="disulfide bond" evidence="1">
    <location>
        <begin position="811"/>
        <end position="822"/>
    </location>
</feature>
<feature type="disulfide bond" evidence="1">
    <location>
        <begin position="816"/>
        <end position="831"/>
    </location>
</feature>
<feature type="disulfide bond" evidence="1">
    <location>
        <begin position="833"/>
        <end position="842"/>
    </location>
</feature>
<feature type="disulfide bond" evidence="1">
    <location>
        <begin position="849"/>
        <end position="860"/>
    </location>
</feature>
<feature type="disulfide bond" evidence="10">
    <location>
        <begin position="1117"/>
        <end position="1138"/>
    </location>
</feature>
<feature type="cross-link" description="Glycyl lysine isopeptide (Lys-Gly) (interchain with G-Cter in ubiquitin)" evidence="3">
    <location>
        <position position="1765"/>
    </location>
</feature>